<protein>
    <recommendedName>
        <fullName>Dixin</fullName>
    </recommendedName>
    <alternativeName>
        <fullName>Coiled-coil protein DIX1</fullName>
        <shortName>Coiled-coil-DIX1</shortName>
    </alternativeName>
    <alternativeName>
        <fullName>DIX domain-containing protein 1</fullName>
    </alternativeName>
</protein>
<comment type="function">
    <text evidence="1">Positive effector of the Wnt signaling pathway; activates WNT3A signaling via DVL2. Regulates JNK activation by AXIN1 and DVL2.</text>
</comment>
<comment type="subunit">
    <text evidence="1">May bind filamentous actin. Interacts with the complex composed of DVL2 and Rac. Interacts with AXIN1; competes with MAP3K1. Interacts with MAP3K4 preventing MAP3K4 interaction with AXIN1. Directly interacts (via DIX domain) with DVL2 (via DIX domain). Interacts with gamma-tubulin.</text>
</comment>
<comment type="subcellular location">
    <subcellularLocation>
        <location evidence="1">Cell junction</location>
        <location evidence="1">Focal adhesion</location>
    </subcellularLocation>
    <subcellularLocation>
        <location evidence="1">Cytoplasm</location>
        <location evidence="1">Cytoskeleton</location>
        <location evidence="1">Stress fiber</location>
    </subcellularLocation>
    <subcellularLocation>
        <location evidence="1">Cytoplasm</location>
    </subcellularLocation>
    <text evidence="1">Colocalizes with gamma-tubulin at the centrosome, both during interphase and mitosis. Associated with actin stress fiber at the filament ends.</text>
</comment>
<comment type="domain">
    <text evidence="1">The coiled-coil domain mediates interaction with MAP3K4 and inhibition of AXIN1-mediated JNK activation through MAP3K4.</text>
</comment>
<comment type="domain">
    <text evidence="1">The DIX domain mediates interaction with AXIN1 and inhibition of AXIN1-mediated JNK activation through MAP3K1. Mediates interaction with DVL2; this interaction is required for activation of Wnt signaling (By similarity).</text>
</comment>
<comment type="PTM">
    <text evidence="1">Phosphorylated on tyrosine and serine residues.</text>
</comment>
<comment type="PTM">
    <text evidence="1">Polyubiquitinated, leading to its proteasomal degradation. WNT3A signaling increases DIXDC1 protein levels by inhibiting its ubiquitination and subsequent degradation (By similarity).</text>
</comment>
<comment type="similarity">
    <text evidence="7">Belongs to the DIXDC1 family.</text>
</comment>
<comment type="sequence caution" evidence="7">
    <conflict type="miscellaneous discrepancy">
        <sequence resource="EMBL-CDS" id="AAX76925"/>
    </conflict>
    <text>Probable cloning artifact.</text>
</comment>
<name>DIXC1_RAT</name>
<accession>Q2VUH7</accession>
<reference key="1">
    <citation type="submission" date="2004-10" db="EMBL/GenBank/DDBJ databases">
        <title>Cloning of wnt pathway protein dixin.</title>
        <authorList>
            <person name="Zhou G."/>
            <person name="Wang X."/>
            <person name="Qian C."/>
            <person name="Liu W."/>
        </authorList>
    </citation>
    <scope>NUCLEOTIDE SEQUENCE [MRNA]</scope>
    <source>
        <strain>Brown Norway</strain>
    </source>
</reference>
<reference key="2">
    <citation type="journal article" date="2004" name="Nature">
        <title>Genome sequence of the Brown Norway rat yields insights into mammalian evolution.</title>
        <authorList>
            <person name="Gibbs R.A."/>
            <person name="Weinstock G.M."/>
            <person name="Metzker M.L."/>
            <person name="Muzny D.M."/>
            <person name="Sodergren E.J."/>
            <person name="Scherer S."/>
            <person name="Scott G."/>
            <person name="Steffen D."/>
            <person name="Worley K.C."/>
            <person name="Burch P.E."/>
            <person name="Okwuonu G."/>
            <person name="Hines S."/>
            <person name="Lewis L."/>
            <person name="Deramo C."/>
            <person name="Delgado O."/>
            <person name="Dugan-Rocha S."/>
            <person name="Miner G."/>
            <person name="Morgan M."/>
            <person name="Hawes A."/>
            <person name="Gill R."/>
            <person name="Holt R.A."/>
            <person name="Adams M.D."/>
            <person name="Amanatides P.G."/>
            <person name="Baden-Tillson H."/>
            <person name="Barnstead M."/>
            <person name="Chin S."/>
            <person name="Evans C.A."/>
            <person name="Ferriera S."/>
            <person name="Fosler C."/>
            <person name="Glodek A."/>
            <person name="Gu Z."/>
            <person name="Jennings D."/>
            <person name="Kraft C.L."/>
            <person name="Nguyen T."/>
            <person name="Pfannkoch C.M."/>
            <person name="Sitter C."/>
            <person name="Sutton G.G."/>
            <person name="Venter J.C."/>
            <person name="Woodage T."/>
            <person name="Smith D."/>
            <person name="Lee H.-M."/>
            <person name="Gustafson E."/>
            <person name="Cahill P."/>
            <person name="Kana A."/>
            <person name="Doucette-Stamm L."/>
            <person name="Weinstock K."/>
            <person name="Fechtel K."/>
            <person name="Weiss R.B."/>
            <person name="Dunn D.M."/>
            <person name="Green E.D."/>
            <person name="Blakesley R.W."/>
            <person name="Bouffard G.G."/>
            <person name="De Jong P.J."/>
            <person name="Osoegawa K."/>
            <person name="Zhu B."/>
            <person name="Marra M."/>
            <person name="Schein J."/>
            <person name="Bosdet I."/>
            <person name="Fjell C."/>
            <person name="Jones S."/>
            <person name="Krzywinski M."/>
            <person name="Mathewson C."/>
            <person name="Siddiqui A."/>
            <person name="Wye N."/>
            <person name="McPherson J."/>
            <person name="Zhao S."/>
            <person name="Fraser C.M."/>
            <person name="Shetty J."/>
            <person name="Shatsman S."/>
            <person name="Geer K."/>
            <person name="Chen Y."/>
            <person name="Abramzon S."/>
            <person name="Nierman W.C."/>
            <person name="Havlak P.H."/>
            <person name="Chen R."/>
            <person name="Durbin K.J."/>
            <person name="Egan A."/>
            <person name="Ren Y."/>
            <person name="Song X.-Z."/>
            <person name="Li B."/>
            <person name="Liu Y."/>
            <person name="Qin X."/>
            <person name="Cawley S."/>
            <person name="Cooney A.J."/>
            <person name="D'Souza L.M."/>
            <person name="Martin K."/>
            <person name="Wu J.Q."/>
            <person name="Gonzalez-Garay M.L."/>
            <person name="Jackson A.R."/>
            <person name="Kalafus K.J."/>
            <person name="McLeod M.P."/>
            <person name="Milosavljevic A."/>
            <person name="Virk D."/>
            <person name="Volkov A."/>
            <person name="Wheeler D.A."/>
            <person name="Zhang Z."/>
            <person name="Bailey J.A."/>
            <person name="Eichler E.E."/>
            <person name="Tuzun E."/>
            <person name="Birney E."/>
            <person name="Mongin E."/>
            <person name="Ureta-Vidal A."/>
            <person name="Woodwark C."/>
            <person name="Zdobnov E."/>
            <person name="Bork P."/>
            <person name="Suyama M."/>
            <person name="Torrents D."/>
            <person name="Alexandersson M."/>
            <person name="Trask B.J."/>
            <person name="Young J.M."/>
            <person name="Huang H."/>
            <person name="Wang H."/>
            <person name="Xing H."/>
            <person name="Daniels S."/>
            <person name="Gietzen D."/>
            <person name="Schmidt J."/>
            <person name="Stevens K."/>
            <person name="Vitt U."/>
            <person name="Wingrove J."/>
            <person name="Camara F."/>
            <person name="Mar Alba M."/>
            <person name="Abril J.F."/>
            <person name="Guigo R."/>
            <person name="Smit A."/>
            <person name="Dubchak I."/>
            <person name="Rubin E.M."/>
            <person name="Couronne O."/>
            <person name="Poliakov A."/>
            <person name="Huebner N."/>
            <person name="Ganten D."/>
            <person name="Goesele C."/>
            <person name="Hummel O."/>
            <person name="Kreitler T."/>
            <person name="Lee Y.-A."/>
            <person name="Monti J."/>
            <person name="Schulz H."/>
            <person name="Zimdahl H."/>
            <person name="Himmelbauer H."/>
            <person name="Lehrach H."/>
            <person name="Jacob H.J."/>
            <person name="Bromberg S."/>
            <person name="Gullings-Handley J."/>
            <person name="Jensen-Seaman M.I."/>
            <person name="Kwitek A.E."/>
            <person name="Lazar J."/>
            <person name="Pasko D."/>
            <person name="Tonellato P.J."/>
            <person name="Twigger S."/>
            <person name="Ponting C.P."/>
            <person name="Duarte J.M."/>
            <person name="Rice S."/>
            <person name="Goodstadt L."/>
            <person name="Beatson S.A."/>
            <person name="Emes R.D."/>
            <person name="Winter E.E."/>
            <person name="Webber C."/>
            <person name="Brandt P."/>
            <person name="Nyakatura G."/>
            <person name="Adetobi M."/>
            <person name="Chiaromonte F."/>
            <person name="Elnitski L."/>
            <person name="Eswara P."/>
            <person name="Hardison R.C."/>
            <person name="Hou M."/>
            <person name="Kolbe D."/>
            <person name="Makova K."/>
            <person name="Miller W."/>
            <person name="Nekrutenko A."/>
            <person name="Riemer C."/>
            <person name="Schwartz S."/>
            <person name="Taylor J."/>
            <person name="Yang S."/>
            <person name="Zhang Y."/>
            <person name="Lindpaintner K."/>
            <person name="Andrews T.D."/>
            <person name="Caccamo M."/>
            <person name="Clamp M."/>
            <person name="Clarke L."/>
            <person name="Curwen V."/>
            <person name="Durbin R.M."/>
            <person name="Eyras E."/>
            <person name="Searle S.M."/>
            <person name="Cooper G.M."/>
            <person name="Batzoglou S."/>
            <person name="Brudno M."/>
            <person name="Sidow A."/>
            <person name="Stone E.A."/>
            <person name="Payseur B.A."/>
            <person name="Bourque G."/>
            <person name="Lopez-Otin C."/>
            <person name="Puente X.S."/>
            <person name="Chakrabarti K."/>
            <person name="Chatterji S."/>
            <person name="Dewey C."/>
            <person name="Pachter L."/>
            <person name="Bray N."/>
            <person name="Yap V.B."/>
            <person name="Caspi A."/>
            <person name="Tesler G."/>
            <person name="Pevzner P.A."/>
            <person name="Haussler D."/>
            <person name="Roskin K.M."/>
            <person name="Baertsch R."/>
            <person name="Clawson H."/>
            <person name="Furey T.S."/>
            <person name="Hinrichs A.S."/>
            <person name="Karolchik D."/>
            <person name="Kent W.J."/>
            <person name="Rosenbloom K.R."/>
            <person name="Trumbower H."/>
            <person name="Weirauch M."/>
            <person name="Cooper D.N."/>
            <person name="Stenson P.D."/>
            <person name="Ma B."/>
            <person name="Brent M."/>
            <person name="Arumugam M."/>
            <person name="Shteynberg D."/>
            <person name="Copley R.R."/>
            <person name="Taylor M.S."/>
            <person name="Riethman H."/>
            <person name="Mudunuri U."/>
            <person name="Peterson J."/>
            <person name="Guyer M."/>
            <person name="Felsenfeld A."/>
            <person name="Old S."/>
            <person name="Mockrin S."/>
            <person name="Collins F.S."/>
        </authorList>
    </citation>
    <scope>NUCLEOTIDE SEQUENCE [LARGE SCALE GENOMIC DNA]</scope>
    <source>
        <strain>Brown Norway</strain>
    </source>
</reference>
<sequence>MLACLTRGNLLDVLQEGFNEQQLQAYVAWVNAQLKKRPSVKPVQDLRQDLRDGVILAYLIEIVAGEKLSGVQLSPSNQQEMKSNVERVLQFVASKNIRMHQTSAKDIVEGNLKSIMRLVLALAAHFKPGSSRTVSQGRDSRTSVQSHQPHCATAVAQGAAAALADVCHDVSRSGRDVFRYRQRNASVDEEIENPYWSVRALVQQYEGQQRSPSESSCSSLTSPSPIHSAKSESIITQSEEKADFVIIPSEGIENRTDETGSPLSRDWRPGSPGTYLEATWEEQLLEQQEHLEKEMEEAKKMISGLQALLLNGSLPEDEQERPVALCEPGVNPEEQLIIIRSRLDQSMEENQDLKKELLKCKQEARNLQGIKDALQQRLTQQDTSVLQLKQELLRANMDKDELHNQNVDLQRKLDERNRLLGEYKKDLGQKDRLLQQQQAKLEDALRKLSDASYQQVDLERELEQKDVLLAHRVKGDTDEVTNYNSHSSQRNGFVLPVAGRAATTATHRGPQSSDLQLVRDALRSLRNSFSGHDPQHHTIDSLEQGISSLIERLHVIETQKKQERKVRGRSPRNQASSEYRASWPPNSTLPHSQSSPAVSNTCTKVLYFTDRSLTPFMVNIPKRLGEVTLKDFKAAIDREGSHRYHFKALDPEFGTVKEEVFHDDDAIPGWEGKIVAWVEDHREN</sequence>
<organism>
    <name type="scientific">Rattus norvegicus</name>
    <name type="common">Rat</name>
    <dbReference type="NCBI Taxonomy" id="10116"/>
    <lineage>
        <taxon>Eukaryota</taxon>
        <taxon>Metazoa</taxon>
        <taxon>Chordata</taxon>
        <taxon>Craniata</taxon>
        <taxon>Vertebrata</taxon>
        <taxon>Euteleostomi</taxon>
        <taxon>Mammalia</taxon>
        <taxon>Eutheria</taxon>
        <taxon>Euarchontoglires</taxon>
        <taxon>Glires</taxon>
        <taxon>Rodentia</taxon>
        <taxon>Myomorpha</taxon>
        <taxon>Muroidea</taxon>
        <taxon>Muridae</taxon>
        <taxon>Murinae</taxon>
        <taxon>Rattus</taxon>
    </lineage>
</organism>
<gene>
    <name type="primary">Dixdc1</name>
    <name type="synonym">Ccd1</name>
</gene>
<feature type="chain" id="PRO_0000287225" description="Dixin">
    <location>
        <begin position="1"/>
        <end position="684"/>
    </location>
</feature>
<feature type="domain" description="Calponin-homology (CH)" evidence="4">
    <location>
        <begin position="20"/>
        <end position="127"/>
    </location>
</feature>
<feature type="domain" description="DIX" evidence="5">
    <location>
        <begin position="602"/>
        <end position="682"/>
    </location>
</feature>
<feature type="region of interest" description="Actin-binding" evidence="1">
    <location>
        <begin position="127"/>
        <end position="300"/>
    </location>
</feature>
<feature type="region of interest" description="Disordered" evidence="6">
    <location>
        <begin position="207"/>
        <end position="235"/>
    </location>
</feature>
<feature type="region of interest" description="Disordered" evidence="6">
    <location>
        <begin position="560"/>
        <end position="597"/>
    </location>
</feature>
<feature type="coiled-coil region" evidence="3">
    <location>
        <begin position="277"/>
        <end position="308"/>
    </location>
</feature>
<feature type="coiled-coil region" evidence="3">
    <location>
        <begin position="336"/>
        <end position="461"/>
    </location>
</feature>
<feature type="compositionally biased region" description="Low complexity" evidence="6">
    <location>
        <begin position="211"/>
        <end position="228"/>
    </location>
</feature>
<feature type="compositionally biased region" description="Polar residues" evidence="6">
    <location>
        <begin position="571"/>
        <end position="597"/>
    </location>
</feature>
<feature type="modified residue" description="Phosphoserine" evidence="2">
    <location>
        <position position="186"/>
    </location>
</feature>
<feature type="modified residue" description="Phosphoserine" evidence="2">
    <location>
        <position position="231"/>
    </location>
</feature>
<feature type="modified residue" description="Phosphoserine" evidence="1">
    <location>
        <position position="592"/>
    </location>
</feature>
<evidence type="ECO:0000250" key="1">
    <source>
        <dbReference type="UniProtKB" id="Q155Q3"/>
    </source>
</evidence>
<evidence type="ECO:0000250" key="2">
    <source>
        <dbReference type="UniProtKB" id="Q80Y83"/>
    </source>
</evidence>
<evidence type="ECO:0000255" key="3"/>
<evidence type="ECO:0000255" key="4">
    <source>
        <dbReference type="PROSITE-ProRule" id="PRU00044"/>
    </source>
</evidence>
<evidence type="ECO:0000255" key="5">
    <source>
        <dbReference type="PROSITE-ProRule" id="PRU00069"/>
    </source>
</evidence>
<evidence type="ECO:0000256" key="6">
    <source>
        <dbReference type="SAM" id="MobiDB-lite"/>
    </source>
</evidence>
<evidence type="ECO:0000305" key="7"/>
<keyword id="KW-0009">Actin-binding</keyword>
<keyword id="KW-0965">Cell junction</keyword>
<keyword id="KW-0175">Coiled coil</keyword>
<keyword id="KW-0963">Cytoplasm</keyword>
<keyword id="KW-0206">Cytoskeleton</keyword>
<keyword id="KW-0217">Developmental protein</keyword>
<keyword id="KW-0597">Phosphoprotein</keyword>
<keyword id="KW-1185">Reference proteome</keyword>
<keyword id="KW-0832">Ubl conjugation</keyword>
<keyword id="KW-0879">Wnt signaling pathway</keyword>
<dbReference type="EMBL" id="AY770507">
    <property type="protein sequence ID" value="AAX76925.1"/>
    <property type="status" value="ALT_SEQ"/>
    <property type="molecule type" value="mRNA"/>
</dbReference>
<dbReference type="EMBL" id="AC094189">
    <property type="status" value="NOT_ANNOTATED_CDS"/>
    <property type="molecule type" value="Genomic_DNA"/>
</dbReference>
<dbReference type="EMBL" id="AC132668">
    <property type="status" value="NOT_ANNOTATED_CDS"/>
    <property type="molecule type" value="Genomic_DNA"/>
</dbReference>
<dbReference type="RefSeq" id="NP_001032743.1">
    <property type="nucleotide sequence ID" value="NM_001037654.1"/>
</dbReference>
<dbReference type="RefSeq" id="NP_001382076.1">
    <property type="nucleotide sequence ID" value="NM_001395147.2"/>
</dbReference>
<dbReference type="RefSeq" id="XP_006243104.1">
    <property type="nucleotide sequence ID" value="XM_006243042.3"/>
</dbReference>
<dbReference type="SMR" id="Q2VUH7"/>
<dbReference type="FunCoup" id="Q2VUH7">
    <property type="interactions" value="2070"/>
</dbReference>
<dbReference type="STRING" id="10116.ENSRNOP00000073690"/>
<dbReference type="PhosphoSitePlus" id="Q2VUH7"/>
<dbReference type="PaxDb" id="10116-ENSRNOP00000037500"/>
<dbReference type="GeneID" id="363062"/>
<dbReference type="UCSC" id="RGD:1309902">
    <property type="organism name" value="rat"/>
</dbReference>
<dbReference type="AGR" id="RGD:1309902"/>
<dbReference type="RGD" id="1309902">
    <property type="gene designation" value="Dixdc1"/>
</dbReference>
<dbReference type="eggNOG" id="ENOG502RD5G">
    <property type="taxonomic scope" value="Eukaryota"/>
</dbReference>
<dbReference type="HOGENOM" id="CLU_025678_0_0_1"/>
<dbReference type="InParanoid" id="Q2VUH7"/>
<dbReference type="PhylomeDB" id="Q2VUH7"/>
<dbReference type="PRO" id="PR:Q2VUH7"/>
<dbReference type="Proteomes" id="UP000002494">
    <property type="component" value="Chromosome 8"/>
</dbReference>
<dbReference type="Bgee" id="ENSRNOG00000010260">
    <property type="expression patterns" value="Expressed in cerebellum and 20 other cell types or tissues"/>
</dbReference>
<dbReference type="ExpressionAtlas" id="Q2VUH7">
    <property type="expression patterns" value="baseline and differential"/>
</dbReference>
<dbReference type="GO" id="GO:0043679">
    <property type="term" value="C:axon terminus"/>
    <property type="evidence" value="ECO:0000314"/>
    <property type="project" value="RGD"/>
</dbReference>
<dbReference type="GO" id="GO:0005829">
    <property type="term" value="C:cytosol"/>
    <property type="evidence" value="ECO:0000250"/>
    <property type="project" value="UniProtKB"/>
</dbReference>
<dbReference type="GO" id="GO:0005925">
    <property type="term" value="C:focal adhesion"/>
    <property type="evidence" value="ECO:0007669"/>
    <property type="project" value="UniProtKB-SubCell"/>
</dbReference>
<dbReference type="GO" id="GO:0098978">
    <property type="term" value="C:glutamatergic synapse"/>
    <property type="evidence" value="ECO:0000266"/>
    <property type="project" value="RGD"/>
</dbReference>
<dbReference type="GO" id="GO:0043025">
    <property type="term" value="C:neuronal cell body"/>
    <property type="evidence" value="ECO:0000314"/>
    <property type="project" value="RGD"/>
</dbReference>
<dbReference type="GO" id="GO:0098794">
    <property type="term" value="C:postsynapse"/>
    <property type="evidence" value="ECO:0000266"/>
    <property type="project" value="RGD"/>
</dbReference>
<dbReference type="GO" id="GO:0032991">
    <property type="term" value="C:protein-containing complex"/>
    <property type="evidence" value="ECO:0000314"/>
    <property type="project" value="RGD"/>
</dbReference>
<dbReference type="GO" id="GO:0001725">
    <property type="term" value="C:stress fiber"/>
    <property type="evidence" value="ECO:0007669"/>
    <property type="project" value="UniProtKB-SubCell"/>
</dbReference>
<dbReference type="GO" id="GO:0003779">
    <property type="term" value="F:actin binding"/>
    <property type="evidence" value="ECO:0007669"/>
    <property type="project" value="UniProtKB-KW"/>
</dbReference>
<dbReference type="GO" id="GO:0043015">
    <property type="term" value="F:gamma-tubulin binding"/>
    <property type="evidence" value="ECO:0000250"/>
    <property type="project" value="UniProtKB"/>
</dbReference>
<dbReference type="GO" id="GO:0031435">
    <property type="term" value="F:mitogen-activated protein kinase kinase kinase binding"/>
    <property type="evidence" value="ECO:0000314"/>
    <property type="project" value="RGD"/>
</dbReference>
<dbReference type="GO" id="GO:0019904">
    <property type="term" value="F:protein domain specific binding"/>
    <property type="evidence" value="ECO:0000266"/>
    <property type="project" value="RGD"/>
</dbReference>
<dbReference type="GO" id="GO:0060070">
    <property type="term" value="P:canonical Wnt signaling pathway"/>
    <property type="evidence" value="ECO:0000250"/>
    <property type="project" value="UniProtKB"/>
</dbReference>
<dbReference type="GO" id="GO:0021846">
    <property type="term" value="P:cell proliferation in forebrain"/>
    <property type="evidence" value="ECO:0000266"/>
    <property type="project" value="RGD"/>
</dbReference>
<dbReference type="GO" id="GO:0021695">
    <property type="term" value="P:cerebellar cortex development"/>
    <property type="evidence" value="ECO:0000315"/>
    <property type="project" value="RGD"/>
</dbReference>
<dbReference type="GO" id="GO:0021795">
    <property type="term" value="P:cerebral cortex cell migration"/>
    <property type="evidence" value="ECO:0000266"/>
    <property type="project" value="RGD"/>
</dbReference>
<dbReference type="GO" id="GO:0021799">
    <property type="term" value="P:cerebral cortex radially oriented cell migration"/>
    <property type="evidence" value="ECO:0000266"/>
    <property type="project" value="RGD"/>
</dbReference>
<dbReference type="GO" id="GO:0021869">
    <property type="term" value="P:forebrain ventricular zone progenitor cell division"/>
    <property type="evidence" value="ECO:0000266"/>
    <property type="project" value="RGD"/>
</dbReference>
<dbReference type="GO" id="GO:0098885">
    <property type="term" value="P:modification of postsynaptic actin cytoskeleton"/>
    <property type="evidence" value="ECO:0000266"/>
    <property type="project" value="RGD"/>
</dbReference>
<dbReference type="GO" id="GO:0045665">
    <property type="term" value="P:negative regulation of neuron differentiation"/>
    <property type="evidence" value="ECO:0000266"/>
    <property type="project" value="RGD"/>
</dbReference>
<dbReference type="GO" id="GO:0050772">
    <property type="term" value="P:positive regulation of axonogenesis"/>
    <property type="evidence" value="ECO:0000315"/>
    <property type="project" value="RGD"/>
</dbReference>
<dbReference type="GO" id="GO:0046330">
    <property type="term" value="P:positive regulation of JNK cascade"/>
    <property type="evidence" value="ECO:0000315"/>
    <property type="project" value="RGD"/>
</dbReference>
<dbReference type="GO" id="GO:0030177">
    <property type="term" value="P:positive regulation of Wnt signaling pathway"/>
    <property type="evidence" value="ECO:0000266"/>
    <property type="project" value="RGD"/>
</dbReference>
<dbReference type="GO" id="GO:0032956">
    <property type="term" value="P:regulation of actin cytoskeleton organization"/>
    <property type="evidence" value="ECO:0000266"/>
    <property type="project" value="RGD"/>
</dbReference>
<dbReference type="GO" id="GO:0070507">
    <property type="term" value="P:regulation of microtubule cytoskeleton organization"/>
    <property type="evidence" value="ECO:0000266"/>
    <property type="project" value="RGD"/>
</dbReference>
<dbReference type="CDD" id="cd21213">
    <property type="entry name" value="CH_DIXDC1"/>
    <property type="match status" value="1"/>
</dbReference>
<dbReference type="FunFam" id="1.10.418.10:FF:000054">
    <property type="entry name" value="Dixin isoform 1"/>
    <property type="match status" value="1"/>
</dbReference>
<dbReference type="FunFam" id="2.40.240.130:FF:000003">
    <property type="entry name" value="Dixin isoform 1"/>
    <property type="match status" value="1"/>
</dbReference>
<dbReference type="Gene3D" id="2.40.240.130">
    <property type="match status" value="1"/>
</dbReference>
<dbReference type="Gene3D" id="1.10.418.10">
    <property type="entry name" value="Calponin-like domain"/>
    <property type="match status" value="1"/>
</dbReference>
<dbReference type="InterPro" id="IPR001715">
    <property type="entry name" value="CH_dom"/>
</dbReference>
<dbReference type="InterPro" id="IPR036872">
    <property type="entry name" value="CH_dom_sf"/>
</dbReference>
<dbReference type="InterPro" id="IPR001158">
    <property type="entry name" value="DIX"/>
</dbReference>
<dbReference type="InterPro" id="IPR038207">
    <property type="entry name" value="DIX_dom_sf"/>
</dbReference>
<dbReference type="InterPro" id="IPR015506">
    <property type="entry name" value="Dsh/Dvl-rel"/>
</dbReference>
<dbReference type="InterPro" id="IPR029071">
    <property type="entry name" value="Ubiquitin-like_domsf"/>
</dbReference>
<dbReference type="PANTHER" id="PTHR10878:SF22">
    <property type="entry name" value="DIXIN"/>
    <property type="match status" value="1"/>
</dbReference>
<dbReference type="PANTHER" id="PTHR10878">
    <property type="entry name" value="SEGMENT POLARITY PROTEIN DISHEVELLED"/>
    <property type="match status" value="1"/>
</dbReference>
<dbReference type="Pfam" id="PF00307">
    <property type="entry name" value="CH"/>
    <property type="match status" value="1"/>
</dbReference>
<dbReference type="Pfam" id="PF00778">
    <property type="entry name" value="DIX"/>
    <property type="match status" value="1"/>
</dbReference>
<dbReference type="SMART" id="SM00033">
    <property type="entry name" value="CH"/>
    <property type="match status" value="1"/>
</dbReference>
<dbReference type="SMART" id="SM00021">
    <property type="entry name" value="DAX"/>
    <property type="match status" value="1"/>
</dbReference>
<dbReference type="SUPFAM" id="SSF47576">
    <property type="entry name" value="Calponin-homology domain, CH-domain"/>
    <property type="match status" value="1"/>
</dbReference>
<dbReference type="SUPFAM" id="SSF54236">
    <property type="entry name" value="Ubiquitin-like"/>
    <property type="match status" value="1"/>
</dbReference>
<dbReference type="PROSITE" id="PS50021">
    <property type="entry name" value="CH"/>
    <property type="match status" value="1"/>
</dbReference>
<dbReference type="PROSITE" id="PS50841">
    <property type="entry name" value="DIX"/>
    <property type="match status" value="1"/>
</dbReference>
<proteinExistence type="evidence at transcript level"/>